<gene>
    <name type="ordered locus">BT9727_2423</name>
</gene>
<organism>
    <name type="scientific">Bacillus thuringiensis subsp. konkukian (strain 97-27)</name>
    <dbReference type="NCBI Taxonomy" id="281309"/>
    <lineage>
        <taxon>Bacteria</taxon>
        <taxon>Bacillati</taxon>
        <taxon>Bacillota</taxon>
        <taxon>Bacilli</taxon>
        <taxon>Bacillales</taxon>
        <taxon>Bacillaceae</taxon>
        <taxon>Bacillus</taxon>
        <taxon>Bacillus cereus group</taxon>
    </lineage>
</organism>
<accession>Q6HI77</accession>
<keyword id="KW-1003">Cell membrane</keyword>
<keyword id="KW-0472">Membrane</keyword>
<keyword id="KW-0812">Transmembrane</keyword>
<keyword id="KW-1133">Transmembrane helix</keyword>
<comment type="subcellular location">
    <subcellularLocation>
        <location evidence="1">Cell membrane</location>
        <topology evidence="1">Multi-pass membrane protein</topology>
    </subcellularLocation>
</comment>
<comment type="similarity">
    <text evidence="1">Belongs to the UPF0397 family.</text>
</comment>
<reference key="1">
    <citation type="journal article" date="2006" name="J. Bacteriol.">
        <title>Pathogenomic sequence analysis of Bacillus cereus and Bacillus thuringiensis isolates closely related to Bacillus anthracis.</title>
        <authorList>
            <person name="Han C.S."/>
            <person name="Xie G."/>
            <person name="Challacombe J.F."/>
            <person name="Altherr M.R."/>
            <person name="Bhotika S.S."/>
            <person name="Bruce D."/>
            <person name="Campbell C.S."/>
            <person name="Campbell M.L."/>
            <person name="Chen J."/>
            <person name="Chertkov O."/>
            <person name="Cleland C."/>
            <person name="Dimitrijevic M."/>
            <person name="Doggett N.A."/>
            <person name="Fawcett J.J."/>
            <person name="Glavina T."/>
            <person name="Goodwin L.A."/>
            <person name="Hill K.K."/>
            <person name="Hitchcock P."/>
            <person name="Jackson P.J."/>
            <person name="Keim P."/>
            <person name="Kewalramani A.R."/>
            <person name="Longmire J."/>
            <person name="Lucas S."/>
            <person name="Malfatti S."/>
            <person name="McMurry K."/>
            <person name="Meincke L.J."/>
            <person name="Misra M."/>
            <person name="Moseman B.L."/>
            <person name="Mundt M."/>
            <person name="Munk A.C."/>
            <person name="Okinaka R.T."/>
            <person name="Parson-Quintana B."/>
            <person name="Reilly L.P."/>
            <person name="Richardson P."/>
            <person name="Robinson D.L."/>
            <person name="Rubin E."/>
            <person name="Saunders E."/>
            <person name="Tapia R."/>
            <person name="Tesmer J.G."/>
            <person name="Thayer N."/>
            <person name="Thompson L.S."/>
            <person name="Tice H."/>
            <person name="Ticknor L.O."/>
            <person name="Wills P.L."/>
            <person name="Brettin T.S."/>
            <person name="Gilna P."/>
        </authorList>
    </citation>
    <scope>NUCLEOTIDE SEQUENCE [LARGE SCALE GENOMIC DNA]</scope>
    <source>
        <strain>97-27</strain>
    </source>
</reference>
<sequence length="182" mass="19222">MNRLSTKLVVAIGIGSALYGILGLWGFSIAPNTFIKPALAILTVFGALFGPVAGLLIGLIGHTVTDTIAGWGIWWGWVISSGIIGFTMGFIQKRVGFSVKNGTYNKGDISYLAITGLIGIVIAIIFAGAFDIIVMGEPFDKIVIQVLGATIADVIVFLVLGLPITIGLAKSNKKHTHLKIEK</sequence>
<proteinExistence type="inferred from homology"/>
<protein>
    <recommendedName>
        <fullName evidence="1">UPF0397 protein BT9727_2423</fullName>
    </recommendedName>
</protein>
<dbReference type="EMBL" id="AE017355">
    <property type="protein sequence ID" value="AAT61388.1"/>
    <property type="molecule type" value="Genomic_DNA"/>
</dbReference>
<dbReference type="RefSeq" id="WP_001081092.1">
    <property type="nucleotide sequence ID" value="NC_005957.1"/>
</dbReference>
<dbReference type="RefSeq" id="YP_036749.1">
    <property type="nucleotide sequence ID" value="NC_005957.1"/>
</dbReference>
<dbReference type="SMR" id="Q6HI77"/>
<dbReference type="KEGG" id="btk:BT9727_2423"/>
<dbReference type="PATRIC" id="fig|281309.8.peg.2564"/>
<dbReference type="HOGENOM" id="CLU_120023_0_0_9"/>
<dbReference type="Proteomes" id="UP000001301">
    <property type="component" value="Chromosome"/>
</dbReference>
<dbReference type="GO" id="GO:0005886">
    <property type="term" value="C:plasma membrane"/>
    <property type="evidence" value="ECO:0007669"/>
    <property type="project" value="UniProtKB-SubCell"/>
</dbReference>
<dbReference type="Gene3D" id="1.10.1760.20">
    <property type="match status" value="1"/>
</dbReference>
<dbReference type="HAMAP" id="MF_01572">
    <property type="entry name" value="UPF0397"/>
    <property type="match status" value="1"/>
</dbReference>
<dbReference type="InterPro" id="IPR009825">
    <property type="entry name" value="ECF_substrate-spec-like"/>
</dbReference>
<dbReference type="InterPro" id="IPR022914">
    <property type="entry name" value="UPF0397"/>
</dbReference>
<dbReference type="NCBIfam" id="NF010182">
    <property type="entry name" value="PRK13661.1"/>
    <property type="match status" value="1"/>
</dbReference>
<dbReference type="PANTHER" id="PTHR37815">
    <property type="entry name" value="UPF0397 PROTEIN BC_2624-RELATED"/>
    <property type="match status" value="1"/>
</dbReference>
<dbReference type="PANTHER" id="PTHR37815:SF3">
    <property type="entry name" value="UPF0397 PROTEIN SPR0429"/>
    <property type="match status" value="1"/>
</dbReference>
<dbReference type="Pfam" id="PF07155">
    <property type="entry name" value="ECF-ribofla_trS"/>
    <property type="match status" value="1"/>
</dbReference>
<name>Y2423_BACHK</name>
<feature type="chain" id="PRO_0000260788" description="UPF0397 protein BT9727_2423">
    <location>
        <begin position="1"/>
        <end position="182"/>
    </location>
</feature>
<feature type="transmembrane region" description="Helical" evidence="1">
    <location>
        <begin position="9"/>
        <end position="29"/>
    </location>
</feature>
<feature type="transmembrane region" description="Helical" evidence="1">
    <location>
        <begin position="40"/>
        <end position="60"/>
    </location>
</feature>
<feature type="transmembrane region" description="Helical" evidence="1">
    <location>
        <begin position="71"/>
        <end position="91"/>
    </location>
</feature>
<feature type="transmembrane region" description="Helical" evidence="1">
    <location>
        <begin position="114"/>
        <end position="134"/>
    </location>
</feature>
<feature type="transmembrane region" description="Helical" evidence="1">
    <location>
        <begin position="142"/>
        <end position="162"/>
    </location>
</feature>
<evidence type="ECO:0000255" key="1">
    <source>
        <dbReference type="HAMAP-Rule" id="MF_01572"/>
    </source>
</evidence>